<organism>
    <name type="scientific">Rattus norvegicus</name>
    <name type="common">Rat</name>
    <dbReference type="NCBI Taxonomy" id="10116"/>
    <lineage>
        <taxon>Eukaryota</taxon>
        <taxon>Metazoa</taxon>
        <taxon>Chordata</taxon>
        <taxon>Craniata</taxon>
        <taxon>Vertebrata</taxon>
        <taxon>Euteleostomi</taxon>
        <taxon>Mammalia</taxon>
        <taxon>Eutheria</taxon>
        <taxon>Euarchontoglires</taxon>
        <taxon>Glires</taxon>
        <taxon>Rodentia</taxon>
        <taxon>Myomorpha</taxon>
        <taxon>Muroidea</taxon>
        <taxon>Muridae</taxon>
        <taxon>Murinae</taxon>
        <taxon>Rattus</taxon>
    </lineage>
</organism>
<gene>
    <name type="primary">N4bp2l2</name>
    <name type="synonym">Pfaap5</name>
</gene>
<accession>Q66H65</accession>
<sequence length="574" mass="65666">MPYSEIEAKFLGPGKELTREPCYKKLKSAVDDGVFPHRGGPDSHRIQEKTKNNRLPVATINFRRRVCPGEDKTSTDVLKPLHKEMPGDKVGGTESIGSQALQDGKPLAPARDDEIYSTSKAFIGPIYKPPEKKKCRERKNETATFNNTDSKRRQEEKQKFNSKKLEIDTELSQFYKEIEELENENEASQGSCKEPEPSQEQTLSHDQACNTLKPEGESKDLSTVLQSHCGYQPYLEDESDYPCDEQLIPAFCDTSFPSFRPEWQSVHPFVIPHDPLPSFNYFNIQRFGAPLHPPPSVFHARDDARLQSGCYIDSYQDGWSCLTLDQNDEYANYDVPGNVHPFGNGYGVQDDSVKNGFCEIRECWQDPSMDMHNEADRFVNQCFQEDRLNKLQKLLILLRGLPGSGKTTLSRILLGQSRDGIVFSTDDYFHHQDGYRYNVNQLGDAHDWNQNRAKQAIDQGRSPVIIDNTNTQAWEMKPYVEMAIGKGYRVEFHEPETWWKFDPEELEKRNKHGVSRKKIAQMLDRYEFQMSISIVMNSVEPTQKSTQTPLPLQGDQRWGGSLGSHSQVSITDDY</sequence>
<reference key="1">
    <citation type="journal article" date="2004" name="Genome Res.">
        <title>The status, quality, and expansion of the NIH full-length cDNA project: the Mammalian Gene Collection (MGC).</title>
        <authorList>
            <consortium name="The MGC Project Team"/>
        </authorList>
    </citation>
    <scope>NUCLEOTIDE SEQUENCE [LARGE SCALE MRNA]</scope>
    <source>
        <tissue>Testis</tissue>
    </source>
</reference>
<name>N42L2_RAT</name>
<protein>
    <recommendedName>
        <fullName>NEDD4-binding protein 2-like 2</fullName>
    </recommendedName>
    <alternativeName>
        <fullName>Phosphonoformate immuno-associated protein 5 homolog</fullName>
    </alternativeName>
</protein>
<feature type="chain" id="PRO_0000299028" description="NEDD4-binding protein 2-like 2">
    <location>
        <begin position="1"/>
        <end position="574"/>
    </location>
</feature>
<feature type="region of interest" description="Disordered" evidence="2">
    <location>
        <begin position="82"/>
        <end position="110"/>
    </location>
</feature>
<feature type="region of interest" description="Disordered" evidence="2">
    <location>
        <begin position="127"/>
        <end position="161"/>
    </location>
</feature>
<feature type="region of interest" description="Disordered" evidence="2">
    <location>
        <begin position="182"/>
        <end position="204"/>
    </location>
</feature>
<feature type="region of interest" description="Disordered" evidence="2">
    <location>
        <begin position="542"/>
        <end position="574"/>
    </location>
</feature>
<feature type="coiled-coil region" evidence="1">
    <location>
        <begin position="162"/>
        <end position="196"/>
    </location>
</feature>
<feature type="compositionally biased region" description="Basic and acidic residues" evidence="2">
    <location>
        <begin position="129"/>
        <end position="141"/>
    </location>
</feature>
<feature type="compositionally biased region" description="Basic and acidic residues" evidence="2">
    <location>
        <begin position="149"/>
        <end position="161"/>
    </location>
</feature>
<feature type="compositionally biased region" description="Polar residues" evidence="2">
    <location>
        <begin position="563"/>
        <end position="574"/>
    </location>
</feature>
<dbReference type="EMBL" id="BC081998">
    <property type="protein sequence ID" value="AAH81998.1"/>
    <property type="molecule type" value="mRNA"/>
</dbReference>
<dbReference type="RefSeq" id="NP_001005533.1">
    <property type="nucleotide sequence ID" value="NM_001005533.2"/>
</dbReference>
<dbReference type="RefSeq" id="XP_006248797.1">
    <property type="nucleotide sequence ID" value="XM_006248735.2"/>
</dbReference>
<dbReference type="FunCoup" id="Q66H65">
    <property type="interactions" value="1589"/>
</dbReference>
<dbReference type="STRING" id="10116.ENSRNOP00000001468"/>
<dbReference type="PhosphoSitePlus" id="Q66H65"/>
<dbReference type="PaxDb" id="10116-ENSRNOP00000001468"/>
<dbReference type="Ensembl" id="ENSRNOT00000001468.6">
    <property type="protein sequence ID" value="ENSRNOP00000001468.5"/>
    <property type="gene ID" value="ENSRNOG00000001108.6"/>
</dbReference>
<dbReference type="GeneID" id="288416"/>
<dbReference type="KEGG" id="rno:288416"/>
<dbReference type="UCSC" id="RGD:1359603">
    <property type="organism name" value="rat"/>
</dbReference>
<dbReference type="AGR" id="RGD:1359603"/>
<dbReference type="CTD" id="10443"/>
<dbReference type="RGD" id="1359603">
    <property type="gene designation" value="N4bp2l2"/>
</dbReference>
<dbReference type="eggNOG" id="KOG2401">
    <property type="taxonomic scope" value="Eukaryota"/>
</dbReference>
<dbReference type="GeneTree" id="ENSGT00940000161440"/>
<dbReference type="HOGENOM" id="CLU_006655_0_0_1"/>
<dbReference type="InParanoid" id="Q66H65"/>
<dbReference type="PhylomeDB" id="Q66H65"/>
<dbReference type="TreeFam" id="TF339118"/>
<dbReference type="PRO" id="PR:Q66H65"/>
<dbReference type="Proteomes" id="UP000002494">
    <property type="component" value="Chromosome 12"/>
</dbReference>
<dbReference type="Bgee" id="ENSRNOG00000001108">
    <property type="expression patterns" value="Expressed in testis and 20 other cell types or tissues"/>
</dbReference>
<dbReference type="GO" id="GO:0005634">
    <property type="term" value="C:nucleus"/>
    <property type="evidence" value="ECO:0000250"/>
    <property type="project" value="UniProtKB"/>
</dbReference>
<dbReference type="GO" id="GO:0017053">
    <property type="term" value="C:transcription repressor complex"/>
    <property type="evidence" value="ECO:0000266"/>
    <property type="project" value="RGD"/>
</dbReference>
<dbReference type="GO" id="GO:0019899">
    <property type="term" value="F:enzyme binding"/>
    <property type="evidence" value="ECO:0000266"/>
    <property type="project" value="RGD"/>
</dbReference>
<dbReference type="GO" id="GO:0003714">
    <property type="term" value="F:transcription corepressor activity"/>
    <property type="evidence" value="ECO:0000250"/>
    <property type="project" value="CAFA"/>
</dbReference>
<dbReference type="GO" id="GO:0001824">
    <property type="term" value="P:blastocyst development"/>
    <property type="evidence" value="ECO:0000266"/>
    <property type="project" value="RGD"/>
</dbReference>
<dbReference type="GO" id="GO:0001701">
    <property type="term" value="P:in utero embryonic development"/>
    <property type="evidence" value="ECO:0000266"/>
    <property type="project" value="RGD"/>
</dbReference>
<dbReference type="GO" id="GO:1902037">
    <property type="term" value="P:negative regulation of hematopoietic stem cell differentiation"/>
    <property type="evidence" value="ECO:0000266"/>
    <property type="project" value="RGD"/>
</dbReference>
<dbReference type="GO" id="GO:0000122">
    <property type="term" value="P:negative regulation of transcription by RNA polymerase II"/>
    <property type="evidence" value="ECO:0000250"/>
    <property type="project" value="CAFA"/>
</dbReference>
<dbReference type="GO" id="GO:1902035">
    <property type="term" value="P:positive regulation of hematopoietic stem cell proliferation"/>
    <property type="evidence" value="ECO:0000266"/>
    <property type="project" value="RGD"/>
</dbReference>
<dbReference type="FunFam" id="3.40.50.300:FF:000620">
    <property type="entry name" value="NEDD4-binding protein 2 isoform X1"/>
    <property type="match status" value="1"/>
</dbReference>
<dbReference type="Gene3D" id="3.40.50.300">
    <property type="entry name" value="P-loop containing nucleotide triphosphate hydrolases"/>
    <property type="match status" value="1"/>
</dbReference>
<dbReference type="InterPro" id="IPR026302">
    <property type="entry name" value="NEDD4-bd_p2"/>
</dbReference>
<dbReference type="InterPro" id="IPR027417">
    <property type="entry name" value="P-loop_NTPase"/>
</dbReference>
<dbReference type="PANTHER" id="PTHR13308">
    <property type="entry name" value="NEDD4-BINDING PROTEIN 2-LIKE 1"/>
    <property type="match status" value="1"/>
</dbReference>
<dbReference type="PANTHER" id="PTHR13308:SF23">
    <property type="entry name" value="NEDD4-BINDING PROTEIN 2-LIKE 2"/>
    <property type="match status" value="1"/>
</dbReference>
<dbReference type="Pfam" id="PF13671">
    <property type="entry name" value="AAA_33"/>
    <property type="match status" value="1"/>
</dbReference>
<dbReference type="SUPFAM" id="SSF52540">
    <property type="entry name" value="P-loop containing nucleoside triphosphate hydrolases"/>
    <property type="match status" value="1"/>
</dbReference>
<proteinExistence type="evidence at transcript level"/>
<keyword id="KW-0175">Coiled coil</keyword>
<keyword id="KW-1185">Reference proteome</keyword>
<evidence type="ECO:0000255" key="1"/>
<evidence type="ECO:0000256" key="2">
    <source>
        <dbReference type="SAM" id="MobiDB-lite"/>
    </source>
</evidence>